<proteinExistence type="inferred from homology"/>
<name>MMM1_YEAS7</name>
<reference key="1">
    <citation type="journal article" date="2007" name="Proc. Natl. Acad. Sci. U.S.A.">
        <title>Genome sequencing and comparative analysis of Saccharomyces cerevisiae strain YJM789.</title>
        <authorList>
            <person name="Wei W."/>
            <person name="McCusker J.H."/>
            <person name="Hyman R.W."/>
            <person name="Jones T."/>
            <person name="Ning Y."/>
            <person name="Cao Z."/>
            <person name="Gu Z."/>
            <person name="Bruno D."/>
            <person name="Miranda M."/>
            <person name="Nguyen M."/>
            <person name="Wilhelmy J."/>
            <person name="Komp C."/>
            <person name="Tamse R."/>
            <person name="Wang X."/>
            <person name="Jia P."/>
            <person name="Luedi P."/>
            <person name="Oefner P.J."/>
            <person name="David L."/>
            <person name="Dietrich F.S."/>
            <person name="Li Y."/>
            <person name="Davis R.W."/>
            <person name="Steinmetz L.M."/>
        </authorList>
    </citation>
    <scope>NUCLEOTIDE SEQUENCE [LARGE SCALE GENOMIC DNA]</scope>
    <source>
        <strain>YJM789</strain>
    </source>
</reference>
<evidence type="ECO:0000255" key="1">
    <source>
        <dbReference type="HAMAP-Rule" id="MF_03103"/>
    </source>
</evidence>
<keyword id="KW-0256">Endoplasmic reticulum</keyword>
<keyword id="KW-0445">Lipid transport</keyword>
<keyword id="KW-0446">Lipid-binding</keyword>
<keyword id="KW-0472">Membrane</keyword>
<keyword id="KW-0812">Transmembrane</keyword>
<keyword id="KW-1133">Transmembrane helix</keyword>
<keyword id="KW-0813">Transport</keyword>
<accession>A7A0Q0</accession>
<sequence>MTDSENESTETDSLMTFDDYISKELPEHLQRLIMENLKGSTTNDLKQTSNNSEFNVSKNGSFKGLDDAIQALQMQSVLHPSSLGSLATSSKFSGWSFAQGFFVGQLSIVLLFIFFLKFFIFSDEPSKSKNPKPAASRHRSKFKEYPFISREFLTSLVRKGAKQHYELNEEAENEHLQELALILEKTYYNVDVHPAESLDWFNVLVAQIIQQFRSEAWHRDNILHSLNDFIGRKSPDLPEYLDTIKITELDTGDDFPIFSNCRIQYSPNSGNKKLEAKIDIDLNDHLTLGVETKLLLNYPKPGIAALPINLVVSIVRFQACLTVSLTNAEEFASTSNGSSSENGMEGNSGYFLMFSFSPEYRMEFEIKSLIGSRSKLENIPKIGSVIEYQIKKWFVERCVEPRFQFVRLPSMWPRSKNTREEKPTEL</sequence>
<comment type="function">
    <text evidence="1">Component of the ERMES/MDM complex, which serves as a molecular tether to connect the endoplasmic reticulum (ER) and mitochondria. Components of this complex are involved in the control of mitochondrial shape and protein biogenesis, and function in nonvesicular lipid trafficking between the ER and mitochondria. The MDM12-MMM1 subcomplex functions in the major beta-barrel assembly pathway that is responsible for biogenesis of all outer membrane beta-barrel proteins, and acts in a late step after the SAM complex. The MDM10-MDM12-MMM1 subcomplex further acts in the TOM40-specific pathway after the action of the MDM12-MMM1 complex. Essential for establishing and maintaining the structure of mitochondria and maintenance of mtDNA nucleoids.</text>
</comment>
<comment type="subunit">
    <text evidence="1">Homodimer. Component of the ER-mitochondria encounter structure (ERMES) or MDM complex, composed of MMM1, MDM10, MDM12 and MDM34. A MMM1 homodimer associates with one molecule of MDM12 on each side in a pairwise head-to-tail manner, and the SMP-LTD domains of MMM1 and MDM12 generate a continuous hydrophobic tunnel for phospholipid trafficking.</text>
</comment>
<comment type="subcellular location">
    <subcellularLocation>
        <location evidence="1">Endoplasmic reticulum membrane</location>
        <topology evidence="1">Single-pass type I membrane protein</topology>
    </subcellularLocation>
    <text evidence="1">The ERMES/MDM complex localizes to a few discrete foci (around 10 per single cell), that represent mitochondria-endoplasmic reticulum junctions. These foci are often found next to mtDNA nucleoids.</text>
</comment>
<comment type="domain">
    <text evidence="1">The SMP-LTD domain is a barrel-like domain that can bind various types of glycerophospholipids in its interior and mediate their transfer between two adjacent bilayers.</text>
</comment>
<comment type="similarity">
    <text evidence="1">Belongs to the MMM1 family.</text>
</comment>
<gene>
    <name evidence="1" type="primary">MMM1</name>
    <name type="ORF">SCY_3574</name>
</gene>
<organism>
    <name type="scientific">Saccharomyces cerevisiae (strain YJM789)</name>
    <name type="common">Baker's yeast</name>
    <dbReference type="NCBI Taxonomy" id="307796"/>
    <lineage>
        <taxon>Eukaryota</taxon>
        <taxon>Fungi</taxon>
        <taxon>Dikarya</taxon>
        <taxon>Ascomycota</taxon>
        <taxon>Saccharomycotina</taxon>
        <taxon>Saccharomycetes</taxon>
        <taxon>Saccharomycetales</taxon>
        <taxon>Saccharomycetaceae</taxon>
        <taxon>Saccharomyces</taxon>
    </lineage>
</organism>
<protein>
    <recommendedName>
        <fullName evidence="1">Maintenance of mitochondrial morphology protein 1</fullName>
    </recommendedName>
    <alternativeName>
        <fullName evidence="1">Mitochondrial outer membrane protein MMM1</fullName>
    </alternativeName>
    <alternativeName>
        <fullName evidence="1">Yeast mitochondrial escape protein 6</fullName>
    </alternativeName>
</protein>
<feature type="chain" id="PRO_0000384253" description="Maintenance of mitochondrial morphology protein 1">
    <location>
        <begin position="1"/>
        <end position="426"/>
    </location>
</feature>
<feature type="topological domain" description="Lumenal" evidence="1">
    <location>
        <begin position="1"/>
        <end position="100"/>
    </location>
</feature>
<feature type="transmembrane region" description="Helical" evidence="1">
    <location>
        <begin position="101"/>
        <end position="121"/>
    </location>
</feature>
<feature type="topological domain" description="Cytoplasmic" evidence="1">
    <location>
        <begin position="122"/>
        <end position="426"/>
    </location>
</feature>
<feature type="domain" description="SMP-LTD" evidence="1">
    <location>
        <begin position="194"/>
        <end position="409"/>
    </location>
</feature>
<dbReference type="EMBL" id="AAFW02000167">
    <property type="protein sequence ID" value="EDN59541.1"/>
    <property type="molecule type" value="Genomic_DNA"/>
</dbReference>
<dbReference type="SMR" id="A7A0Q0"/>
<dbReference type="HOGENOM" id="CLU_032730_2_0_1"/>
<dbReference type="Proteomes" id="UP000007060">
    <property type="component" value="Unassembled WGS sequence"/>
</dbReference>
<dbReference type="GO" id="GO:0005789">
    <property type="term" value="C:endoplasmic reticulum membrane"/>
    <property type="evidence" value="ECO:0007669"/>
    <property type="project" value="UniProtKB-SubCell"/>
</dbReference>
<dbReference type="GO" id="GO:0032865">
    <property type="term" value="C:ERMES complex"/>
    <property type="evidence" value="ECO:0007669"/>
    <property type="project" value="UniProtKB-UniRule"/>
</dbReference>
<dbReference type="GO" id="GO:0008289">
    <property type="term" value="F:lipid binding"/>
    <property type="evidence" value="ECO:0007669"/>
    <property type="project" value="UniProtKB-KW"/>
</dbReference>
<dbReference type="GO" id="GO:0006869">
    <property type="term" value="P:lipid transport"/>
    <property type="evidence" value="ECO:0007669"/>
    <property type="project" value="UniProtKB-KW"/>
</dbReference>
<dbReference type="GO" id="GO:0000002">
    <property type="term" value="P:mitochondrial genome maintenance"/>
    <property type="evidence" value="ECO:0007669"/>
    <property type="project" value="UniProtKB-UniRule"/>
</dbReference>
<dbReference type="GO" id="GO:0045040">
    <property type="term" value="P:protein insertion into mitochondrial outer membrane"/>
    <property type="evidence" value="ECO:0007669"/>
    <property type="project" value="UniProtKB-UniRule"/>
</dbReference>
<dbReference type="CDD" id="cd21671">
    <property type="entry name" value="SMP_Mmm1"/>
    <property type="match status" value="1"/>
</dbReference>
<dbReference type="HAMAP" id="MF_03103">
    <property type="entry name" value="Mmm1"/>
    <property type="match status" value="1"/>
</dbReference>
<dbReference type="InterPro" id="IPR027537">
    <property type="entry name" value="Mmm1"/>
</dbReference>
<dbReference type="InterPro" id="IPR019411">
    <property type="entry name" value="MMM1_dom"/>
</dbReference>
<dbReference type="InterPro" id="IPR031468">
    <property type="entry name" value="SMP_LBD"/>
</dbReference>
<dbReference type="PANTHER" id="PTHR13466">
    <property type="entry name" value="TEX2 PROTEIN-RELATED"/>
    <property type="match status" value="1"/>
</dbReference>
<dbReference type="Pfam" id="PF10296">
    <property type="entry name" value="MMM1"/>
    <property type="match status" value="1"/>
</dbReference>
<dbReference type="PROSITE" id="PS51847">
    <property type="entry name" value="SMP"/>
    <property type="match status" value="1"/>
</dbReference>